<reference key="1">
    <citation type="journal article" date="2001" name="Plant Mol. Biol.">
        <title>Molecular identification and characterization of the Arabidopsis AtADF1, AtADF5 and AtADF6 genes.</title>
        <authorList>
            <person name="Dong C.-H."/>
            <person name="Kost B."/>
            <person name="Xia G.-X."/>
            <person name="Chua N.-H."/>
        </authorList>
    </citation>
    <scope>NUCLEOTIDE SEQUENCE [GENOMIC DNA / MRNA]</scope>
    <scope>TISSUE SPECIFICITY</scope>
    <scope>CHARACTERIZATION</scope>
    <source>
        <strain>cv. Columbia</strain>
    </source>
</reference>
<reference key="2">
    <citation type="journal article" date="1999" name="Nature">
        <title>Sequence and analysis of chromosome 2 of the plant Arabidopsis thaliana.</title>
        <authorList>
            <person name="Lin X."/>
            <person name="Kaul S."/>
            <person name="Rounsley S.D."/>
            <person name="Shea T.P."/>
            <person name="Benito M.-I."/>
            <person name="Town C.D."/>
            <person name="Fujii C.Y."/>
            <person name="Mason T.M."/>
            <person name="Bowman C.L."/>
            <person name="Barnstead M.E."/>
            <person name="Feldblyum T.V."/>
            <person name="Buell C.R."/>
            <person name="Ketchum K.A."/>
            <person name="Lee J.J."/>
            <person name="Ronning C.M."/>
            <person name="Koo H.L."/>
            <person name="Moffat K.S."/>
            <person name="Cronin L.A."/>
            <person name="Shen M."/>
            <person name="Pai G."/>
            <person name="Van Aken S."/>
            <person name="Umayam L."/>
            <person name="Tallon L.J."/>
            <person name="Gill J.E."/>
            <person name="Adams M.D."/>
            <person name="Carrera A.J."/>
            <person name="Creasy T.H."/>
            <person name="Goodman H.M."/>
            <person name="Somerville C.R."/>
            <person name="Copenhaver G.P."/>
            <person name="Preuss D."/>
            <person name="Nierman W.C."/>
            <person name="White O."/>
            <person name="Eisen J.A."/>
            <person name="Salzberg S.L."/>
            <person name="Fraser C.M."/>
            <person name="Venter J.C."/>
        </authorList>
    </citation>
    <scope>NUCLEOTIDE SEQUENCE [LARGE SCALE GENOMIC DNA]</scope>
    <source>
        <strain>cv. Columbia</strain>
    </source>
</reference>
<reference key="3">
    <citation type="journal article" date="2017" name="Plant J.">
        <title>Araport11: a complete reannotation of the Arabidopsis thaliana reference genome.</title>
        <authorList>
            <person name="Cheng C.Y."/>
            <person name="Krishnakumar V."/>
            <person name="Chan A.P."/>
            <person name="Thibaud-Nissen F."/>
            <person name="Schobel S."/>
            <person name="Town C.D."/>
        </authorList>
    </citation>
    <scope>GENOME REANNOTATION</scope>
    <source>
        <strain>cv. Columbia</strain>
    </source>
</reference>
<reference key="4">
    <citation type="journal article" date="2003" name="Science">
        <title>Empirical analysis of transcriptional activity in the Arabidopsis genome.</title>
        <authorList>
            <person name="Yamada K."/>
            <person name="Lim J."/>
            <person name="Dale J.M."/>
            <person name="Chen H."/>
            <person name="Shinn P."/>
            <person name="Palm C.J."/>
            <person name="Southwick A.M."/>
            <person name="Wu H.C."/>
            <person name="Kim C.J."/>
            <person name="Nguyen M."/>
            <person name="Pham P.K."/>
            <person name="Cheuk R.F."/>
            <person name="Karlin-Newmann G."/>
            <person name="Liu S.X."/>
            <person name="Lam B."/>
            <person name="Sakano H."/>
            <person name="Wu T."/>
            <person name="Yu G."/>
            <person name="Miranda M."/>
            <person name="Quach H.L."/>
            <person name="Tripp M."/>
            <person name="Chang C.H."/>
            <person name="Lee J.M."/>
            <person name="Toriumi M.J."/>
            <person name="Chan M.M."/>
            <person name="Tang C.C."/>
            <person name="Onodera C.S."/>
            <person name="Deng J.M."/>
            <person name="Akiyama K."/>
            <person name="Ansari Y."/>
            <person name="Arakawa T."/>
            <person name="Banh J."/>
            <person name="Banno F."/>
            <person name="Bowser L."/>
            <person name="Brooks S.Y."/>
            <person name="Carninci P."/>
            <person name="Chao Q."/>
            <person name="Choy N."/>
            <person name="Enju A."/>
            <person name="Goldsmith A.D."/>
            <person name="Gurjal M."/>
            <person name="Hansen N.F."/>
            <person name="Hayashizaki Y."/>
            <person name="Johnson-Hopson C."/>
            <person name="Hsuan V.W."/>
            <person name="Iida K."/>
            <person name="Karnes M."/>
            <person name="Khan S."/>
            <person name="Koesema E."/>
            <person name="Ishida J."/>
            <person name="Jiang P.X."/>
            <person name="Jones T."/>
            <person name="Kawai J."/>
            <person name="Kamiya A."/>
            <person name="Meyers C."/>
            <person name="Nakajima M."/>
            <person name="Narusaka M."/>
            <person name="Seki M."/>
            <person name="Sakurai T."/>
            <person name="Satou M."/>
            <person name="Tamse R."/>
            <person name="Vaysberg M."/>
            <person name="Wallender E.K."/>
            <person name="Wong C."/>
            <person name="Yamamura Y."/>
            <person name="Yuan S."/>
            <person name="Shinozaki K."/>
            <person name="Davis R.W."/>
            <person name="Theologis A."/>
            <person name="Ecker J.R."/>
        </authorList>
    </citation>
    <scope>NUCLEOTIDE SEQUENCE [LARGE SCALE MRNA]</scope>
    <source>
        <strain>cv. Columbia</strain>
    </source>
</reference>
<reference key="5">
    <citation type="submission" date="2002-03" db="EMBL/GenBank/DDBJ databases">
        <title>Full-length cDNA from Arabidopsis thaliana.</title>
        <authorList>
            <person name="Brover V.V."/>
            <person name="Troukhan M.E."/>
            <person name="Alexandrov N.A."/>
            <person name="Lu Y.-P."/>
            <person name="Flavell R.B."/>
            <person name="Feldmann K.A."/>
        </authorList>
    </citation>
    <scope>NUCLEOTIDE SEQUENCE [LARGE SCALE MRNA]</scope>
</reference>
<reference key="6">
    <citation type="journal article" date="2006" name="J. Plant Physiol.">
        <title>Comparative study of rice and Arabidopsis actin-depolymerizing factors gene families.</title>
        <authorList>
            <person name="Feng Y."/>
            <person name="Liu Q."/>
            <person name="Xue Q."/>
        </authorList>
    </citation>
    <scope>GENE FAMILY</scope>
</reference>
<reference key="7">
    <citation type="journal article" date="2009" name="Plant Cell">
        <title>Actin-depolymerizing factor2-mediated actin dynamics are essential for root-knot nematode infection of Arabidopsis.</title>
        <authorList>
            <person name="Clement M."/>
            <person name="Ketelaar T."/>
            <person name="Rodiuc N."/>
            <person name="Banora M.Y."/>
            <person name="Smertenko A."/>
            <person name="Engler G."/>
            <person name="Abad P."/>
            <person name="Hussey P.J."/>
            <person name="de Almeida Engler J."/>
        </authorList>
    </citation>
    <scope>INDUCTION</scope>
</reference>
<protein>
    <recommendedName>
        <fullName>Actin-depolymerizing factor 6</fullName>
        <shortName>ADF-6</shortName>
        <shortName>AtADF6</shortName>
    </recommendedName>
</protein>
<accession>Q9ZSK2</accession>
<accession>Q8LCM6</accession>
<accession>Q93VZ4</accession>
<accession>Q9SJX6</accession>
<evidence type="ECO:0000250" key="1">
    <source>
        <dbReference type="UniProtKB" id="Q39250"/>
    </source>
</evidence>
<evidence type="ECO:0000250" key="2">
    <source>
        <dbReference type="UniProtKB" id="Q9ZSK3"/>
    </source>
</evidence>
<evidence type="ECO:0000255" key="3">
    <source>
        <dbReference type="PROSITE-ProRule" id="PRU00599"/>
    </source>
</evidence>
<evidence type="ECO:0000269" key="4">
    <source>
    </source>
</evidence>
<evidence type="ECO:0000269" key="5">
    <source>
    </source>
</evidence>
<evidence type="ECO:0000305" key="6"/>
<gene>
    <name type="primary">ADF6</name>
    <name type="ordered locus">At2g31200</name>
    <name type="ORF">F16D14.4</name>
</gene>
<feature type="chain" id="PRO_0000214928" description="Actin-depolymerizing factor 6">
    <location>
        <begin position="1"/>
        <end position="146"/>
    </location>
</feature>
<feature type="domain" description="ADF-H" evidence="3">
    <location>
        <begin position="14"/>
        <end position="146"/>
    </location>
</feature>
<feature type="modified residue" description="Phosphoserine" evidence="1">
    <location>
        <position position="13"/>
    </location>
</feature>
<feature type="sequence conflict" description="In Ref. 4; AAK49596." evidence="6" ref="4">
    <original>M</original>
    <variation>L</variation>
    <location>
        <position position="1"/>
    </location>
</feature>
<feature type="sequence conflict" description="In Ref. 5; AAM63510." evidence="6" ref="5">
    <original>A</original>
    <variation>S</variation>
    <location>
        <position position="96"/>
    </location>
</feature>
<feature type="sequence conflict" description="In Ref. 5; AAM63510." evidence="6" ref="5">
    <original>GI</original>
    <variation>PV</variation>
    <location>
        <begin position="103"/>
        <end position="104"/>
    </location>
</feature>
<feature type="sequence conflict" description="In Ref. 5; AAM63510." evidence="6" ref="5">
    <original>R</original>
    <variation>K</variation>
    <location>
        <position position="119"/>
    </location>
</feature>
<dbReference type="EMBL" id="AF102824">
    <property type="protein sequence ID" value="AAD09112.1"/>
    <property type="molecule type" value="mRNA"/>
</dbReference>
<dbReference type="EMBL" id="AF183576">
    <property type="protein sequence ID" value="AAF01035.1"/>
    <property type="molecule type" value="Genomic_DNA"/>
</dbReference>
<dbReference type="EMBL" id="AC006593">
    <property type="protein sequence ID" value="AAD20665.2"/>
    <property type="molecule type" value="Genomic_DNA"/>
</dbReference>
<dbReference type="EMBL" id="CP002685">
    <property type="protein sequence ID" value="AEC08507.1"/>
    <property type="molecule type" value="Genomic_DNA"/>
</dbReference>
<dbReference type="EMBL" id="AY057719">
    <property type="protein sequence ID" value="AAL15349.1"/>
    <property type="molecule type" value="mRNA"/>
</dbReference>
<dbReference type="EMBL" id="AF372880">
    <property type="protein sequence ID" value="AAK49596.1"/>
    <property type="status" value="ALT_INIT"/>
    <property type="molecule type" value="mRNA"/>
</dbReference>
<dbReference type="EMBL" id="AY086510">
    <property type="protein sequence ID" value="AAM63510.1"/>
    <property type="molecule type" value="mRNA"/>
</dbReference>
<dbReference type="PIR" id="G84717">
    <property type="entry name" value="G84717"/>
</dbReference>
<dbReference type="RefSeq" id="NP_565719.1">
    <property type="nucleotide sequence ID" value="NM_128676.5"/>
</dbReference>
<dbReference type="SMR" id="Q9ZSK2"/>
<dbReference type="BioGRID" id="3024">
    <property type="interactions" value="4"/>
</dbReference>
<dbReference type="FunCoup" id="Q9ZSK2">
    <property type="interactions" value="3159"/>
</dbReference>
<dbReference type="IntAct" id="Q9ZSK2">
    <property type="interactions" value="4"/>
</dbReference>
<dbReference type="STRING" id="3702.Q9ZSK2"/>
<dbReference type="PaxDb" id="3702-AT2G31200.1"/>
<dbReference type="ProteomicsDB" id="244856"/>
<dbReference type="EnsemblPlants" id="AT2G31200.1">
    <property type="protein sequence ID" value="AT2G31200.1"/>
    <property type="gene ID" value="AT2G31200"/>
</dbReference>
<dbReference type="GeneID" id="817676"/>
<dbReference type="Gramene" id="AT2G31200.1">
    <property type="protein sequence ID" value="AT2G31200.1"/>
    <property type="gene ID" value="AT2G31200"/>
</dbReference>
<dbReference type="KEGG" id="ath:AT2G31200"/>
<dbReference type="Araport" id="AT2G31200"/>
<dbReference type="TAIR" id="AT2G31200">
    <property type="gene designation" value="ADF6"/>
</dbReference>
<dbReference type="eggNOG" id="KOG1735">
    <property type="taxonomic scope" value="Eukaryota"/>
</dbReference>
<dbReference type="HOGENOM" id="CLU_094004_2_2_1"/>
<dbReference type="InParanoid" id="Q9ZSK2"/>
<dbReference type="OMA" id="ITFYSWS"/>
<dbReference type="PhylomeDB" id="Q9ZSK2"/>
<dbReference type="PRO" id="PR:Q9ZSK2"/>
<dbReference type="Proteomes" id="UP000006548">
    <property type="component" value="Chromosome 2"/>
</dbReference>
<dbReference type="ExpressionAtlas" id="Q9ZSK2">
    <property type="expression patterns" value="baseline and differential"/>
</dbReference>
<dbReference type="GO" id="GO:0015629">
    <property type="term" value="C:actin cytoskeleton"/>
    <property type="evidence" value="ECO:0007669"/>
    <property type="project" value="InterPro"/>
</dbReference>
<dbReference type="GO" id="GO:0005737">
    <property type="term" value="C:cytoplasm"/>
    <property type="evidence" value="ECO:0007669"/>
    <property type="project" value="UniProtKB-KW"/>
</dbReference>
<dbReference type="GO" id="GO:0003779">
    <property type="term" value="F:actin binding"/>
    <property type="evidence" value="ECO:0007669"/>
    <property type="project" value="UniProtKB-KW"/>
</dbReference>
<dbReference type="GO" id="GO:0030042">
    <property type="term" value="P:actin filament depolymerization"/>
    <property type="evidence" value="ECO:0000314"/>
    <property type="project" value="TAIR"/>
</dbReference>
<dbReference type="CDD" id="cd11286">
    <property type="entry name" value="ADF_cofilin_like"/>
    <property type="match status" value="1"/>
</dbReference>
<dbReference type="Gene3D" id="3.40.20.10">
    <property type="entry name" value="Severin"/>
    <property type="match status" value="1"/>
</dbReference>
<dbReference type="InterPro" id="IPR002108">
    <property type="entry name" value="ADF-H"/>
</dbReference>
<dbReference type="InterPro" id="IPR029006">
    <property type="entry name" value="ADF-H/Gelsolin-like_dom_sf"/>
</dbReference>
<dbReference type="InterPro" id="IPR017904">
    <property type="entry name" value="ADF/Cofilin"/>
</dbReference>
<dbReference type="PANTHER" id="PTHR11913">
    <property type="entry name" value="COFILIN-RELATED"/>
    <property type="match status" value="1"/>
</dbReference>
<dbReference type="Pfam" id="PF00241">
    <property type="entry name" value="Cofilin_ADF"/>
    <property type="match status" value="1"/>
</dbReference>
<dbReference type="SMART" id="SM00102">
    <property type="entry name" value="ADF"/>
    <property type="match status" value="1"/>
</dbReference>
<dbReference type="SUPFAM" id="SSF55753">
    <property type="entry name" value="Actin depolymerizing proteins"/>
    <property type="match status" value="1"/>
</dbReference>
<dbReference type="PROSITE" id="PS51263">
    <property type="entry name" value="ADF_H"/>
    <property type="match status" value="1"/>
</dbReference>
<keyword id="KW-0009">Actin-binding</keyword>
<keyword id="KW-0963">Cytoplasm</keyword>
<keyword id="KW-0206">Cytoskeleton</keyword>
<keyword id="KW-0597">Phosphoprotein</keyword>
<keyword id="KW-1185">Reference proteome</keyword>
<comment type="function">
    <text evidence="4">Actin-depolymerizing protein. Severs actin filaments (F-actin) and binds to actin monomers.</text>
</comment>
<comment type="subcellular location">
    <subcellularLocation>
        <location evidence="2">Cytoplasm</location>
        <location evidence="2">Cytoskeleton</location>
    </subcellularLocation>
</comment>
<comment type="tissue specificity">
    <text evidence="4">Expressed in vascular tissues of all organs.</text>
</comment>
<comment type="induction">
    <text evidence="5">By the root-knot nematode Meloidogyne incognita.</text>
</comment>
<comment type="PTM">
    <text>Phosphorylated.</text>
</comment>
<comment type="similarity">
    <text evidence="6">Belongs to the actin-binding proteins ADF family.</text>
</comment>
<comment type="sequence caution" evidence="6">
    <conflict type="erroneous initiation">
        <sequence resource="EMBL-CDS" id="AAK49596"/>
    </conflict>
</comment>
<organism>
    <name type="scientific">Arabidopsis thaliana</name>
    <name type="common">Mouse-ear cress</name>
    <dbReference type="NCBI Taxonomy" id="3702"/>
    <lineage>
        <taxon>Eukaryota</taxon>
        <taxon>Viridiplantae</taxon>
        <taxon>Streptophyta</taxon>
        <taxon>Embryophyta</taxon>
        <taxon>Tracheophyta</taxon>
        <taxon>Spermatophyta</taxon>
        <taxon>Magnoliopsida</taxon>
        <taxon>eudicotyledons</taxon>
        <taxon>Gunneridae</taxon>
        <taxon>Pentapetalae</taxon>
        <taxon>rosids</taxon>
        <taxon>malvids</taxon>
        <taxon>Brassicales</taxon>
        <taxon>Brassicaceae</taxon>
        <taxon>Camelineae</taxon>
        <taxon>Arabidopsis</taxon>
    </lineage>
</organism>
<sequence length="146" mass="16708">MSFRGLSRPNAISGMGVADESKTTFLELQRKKTHRYVVFKIDESKKEVVVEKTGNPTESYDDFLASLPDNDCRYAVYDFDFVTSENCQKSKIFFFAWSPSTSGIRAKVLYSTSKDQLSRELQGIHYEIQATDPTEVDLEVLRERAN</sequence>
<proteinExistence type="evidence at protein level"/>
<name>ADF6_ARATH</name>